<gene>
    <name evidence="4" type="primary">hepT</name>
    <name type="ORF">CL1_0071</name>
</gene>
<proteinExistence type="evidence at protein level"/>
<accession>I3ZRF2</accession>
<sequence>MKRSHKDYLEDIAEAIELIEEFTREICFEDFLCDKKTQFAVIRALEIIGEASKNIPNDFKRLHPEIPWREMARMRDKLIHAYFGVDVRVLWKTVKEDIPSLKGKFEKLRK</sequence>
<comment type="function">
    <text evidence="2 3 6">Toxic component of a type VII toxin-antitoxin (TA) system. Overexpression in E.coli inhibits cell growth. Neutralized by cognate antitoxin MntA (PubMed:33045733). Neutralization is probably due to AMPylation by MntA (Probable). Probably an RNAase (By similarity).</text>
</comment>
<comment type="PTM">
    <text evidence="3">Modified by cognate antitoxin MntA; probably at least 2 successive AMPylation events occur on Tyr-82.</text>
</comment>
<comment type="similarity">
    <text evidence="5">Belongs to the HepT RNase toxin family.</text>
</comment>
<protein>
    <recommendedName>
        <fullName>Probable ribonuclease HepT</fullName>
        <ecNumber evidence="2">3.1.-.-</ecNumber>
    </recommendedName>
    <alternativeName>
        <fullName evidence="4">Toxin HepT</fullName>
    </alternativeName>
</protein>
<reference key="1">
    <citation type="journal article" date="2012" name="J. Bacteriol.">
        <title>Complete Genome Sequence of the Hyperthermophilic Archaeon Thermococcus sp. Strain CL1, Isolated from a Paralvinella sp. Polychaete Worm Collected from a Hydrothermal Vent.</title>
        <authorList>
            <person name="Jung J.H."/>
            <person name="Holden J.F."/>
            <person name="Seo D.H."/>
            <person name="Park K.H."/>
            <person name="Shin H."/>
            <person name="Ryu S."/>
            <person name="Lee J.H."/>
            <person name="Park C.S."/>
        </authorList>
    </citation>
    <scope>NUCLEOTIDE SEQUENCE [LARGE SCALE GENOMIC DNA]</scope>
    <source>
        <strain>DSM 27260 / KACC 17922 / CL1</strain>
    </source>
</reference>
<reference key="2">
    <citation type="journal article" date="2020" name="Nucleic Acids Res.">
        <title>Novel polyadenylylation-dependent neutralization mechanism of the HEPN/MNT toxin/antitoxin system.</title>
        <authorList>
            <person name="Yao J."/>
            <person name="Zhen X."/>
            <person name="Tang K."/>
            <person name="Liu T."/>
            <person name="Xu X."/>
            <person name="Chen Z."/>
            <person name="Guo Y."/>
            <person name="Liu X."/>
            <person name="Wood T.K."/>
            <person name="Ouyang S."/>
            <person name="Wang X."/>
        </authorList>
    </citation>
    <scope>FUNCTION AS A TOXIN</scope>
    <scope>PROBABLE AMPYLATION AT TYR-82</scope>
    <scope>MUTAGENESIS OF TYR-82</scope>
    <source>
        <strain>DSM 27260 / KACC 17922 / CL1</strain>
    </source>
</reference>
<name>HEPT_THECF</name>
<dbReference type="EC" id="3.1.-.-" evidence="2"/>
<dbReference type="EMBL" id="CP003651">
    <property type="protein sequence ID" value="AFL94286.1"/>
    <property type="molecule type" value="Genomic_DNA"/>
</dbReference>
<dbReference type="RefSeq" id="WP_014787927.1">
    <property type="nucleotide sequence ID" value="NC_018015.1"/>
</dbReference>
<dbReference type="SMR" id="I3ZRF2"/>
<dbReference type="STRING" id="163003.CL1_0071"/>
<dbReference type="GeneID" id="13038727"/>
<dbReference type="KEGG" id="thm:CL1_0071"/>
<dbReference type="HOGENOM" id="CLU_142825_3_3_2"/>
<dbReference type="OrthoDB" id="318716at2157"/>
<dbReference type="Proteomes" id="UP000006064">
    <property type="component" value="Chromosome"/>
</dbReference>
<dbReference type="GO" id="GO:0110001">
    <property type="term" value="C:toxin-antitoxin complex"/>
    <property type="evidence" value="ECO:0007669"/>
    <property type="project" value="InterPro"/>
</dbReference>
<dbReference type="GO" id="GO:0000166">
    <property type="term" value="F:nucleotide binding"/>
    <property type="evidence" value="ECO:0007669"/>
    <property type="project" value="UniProtKB-KW"/>
</dbReference>
<dbReference type="GO" id="GO:0004540">
    <property type="term" value="F:RNA nuclease activity"/>
    <property type="evidence" value="ECO:0007669"/>
    <property type="project" value="InterPro"/>
</dbReference>
<dbReference type="InterPro" id="IPR008201">
    <property type="entry name" value="HepT-like"/>
</dbReference>
<dbReference type="InterPro" id="IPR051813">
    <property type="entry name" value="HepT_RNase_toxin"/>
</dbReference>
<dbReference type="PANTHER" id="PTHR34139:SF1">
    <property type="entry name" value="RNASE MJ1380-RELATED"/>
    <property type="match status" value="1"/>
</dbReference>
<dbReference type="PANTHER" id="PTHR34139">
    <property type="entry name" value="UPF0331 PROTEIN MJ0127"/>
    <property type="match status" value="1"/>
</dbReference>
<dbReference type="Pfam" id="PF01934">
    <property type="entry name" value="HepT-like"/>
    <property type="match status" value="1"/>
</dbReference>
<evidence type="ECO:0000250" key="1">
    <source>
        <dbReference type="UniProtKB" id="A0A0B0QJR1"/>
    </source>
</evidence>
<evidence type="ECO:0000250" key="2">
    <source>
        <dbReference type="UniProtKB" id="Q8ECH6"/>
    </source>
</evidence>
<evidence type="ECO:0000269" key="3">
    <source>
    </source>
</evidence>
<evidence type="ECO:0000303" key="4">
    <source>
    </source>
</evidence>
<evidence type="ECO:0000305" key="5"/>
<evidence type="ECO:0000305" key="6">
    <source>
    </source>
</evidence>
<keyword id="KW-0378">Hydrolase</keyword>
<keyword id="KW-0540">Nuclease</keyword>
<keyword id="KW-0547">Nucleotide-binding</keyword>
<keyword id="KW-0597">Phosphoprotein</keyword>
<keyword id="KW-1277">Toxin-antitoxin system</keyword>
<feature type="chain" id="PRO_0000452434" description="Probable ribonuclease HepT">
    <location>
        <begin position="1"/>
        <end position="110"/>
    </location>
</feature>
<feature type="short sequence motif" description="RX(4)HXY motif" evidence="3">
    <location>
        <begin position="75"/>
        <end position="82"/>
    </location>
</feature>
<feature type="active site" evidence="1">
    <location>
        <position position="75"/>
    </location>
</feature>
<feature type="active site" evidence="1">
    <location>
        <position position="80"/>
    </location>
</feature>
<feature type="modified residue" description="O-di-AMP-tyrosine" evidence="6">
    <location>
        <position position="82"/>
    </location>
</feature>
<feature type="mutagenesis site" description="Remains toxic, no longer modified by MntA." evidence="3">
    <original>Y</original>
    <variation>F</variation>
    <location>
        <position position="82"/>
    </location>
</feature>
<organism>
    <name type="scientific">Thermococcus cleftensis (strain DSM 27260 / KACC 17922 / CL1)</name>
    <dbReference type="NCBI Taxonomy" id="163003"/>
    <lineage>
        <taxon>Archaea</taxon>
        <taxon>Methanobacteriati</taxon>
        <taxon>Methanobacteriota</taxon>
        <taxon>Thermococci</taxon>
        <taxon>Thermococcales</taxon>
        <taxon>Thermococcaceae</taxon>
        <taxon>Thermococcus</taxon>
    </lineage>
</organism>